<proteinExistence type="inferred from homology"/>
<comment type="function">
    <text evidence="1">Isomerase that catalyzes the conversion of deoxy-ribose 1-phosphate (dRib-1-P) and ribose 1-phosphate (Rib-1-P) to deoxy-ribose 5-phosphate (dRib-5-P) and ribose 5-phosphate (Rib-5-P), respectively.</text>
</comment>
<comment type="catalytic activity">
    <reaction evidence="1">
        <text>2-deoxy-alpha-D-ribose 1-phosphate = 2-deoxy-D-ribose 5-phosphate</text>
        <dbReference type="Rhea" id="RHEA:27658"/>
        <dbReference type="ChEBI" id="CHEBI:57259"/>
        <dbReference type="ChEBI" id="CHEBI:62877"/>
        <dbReference type="EC" id="5.4.2.7"/>
    </reaction>
</comment>
<comment type="catalytic activity">
    <reaction evidence="1">
        <text>alpha-D-ribose 1-phosphate = D-ribose 5-phosphate</text>
        <dbReference type="Rhea" id="RHEA:18793"/>
        <dbReference type="ChEBI" id="CHEBI:57720"/>
        <dbReference type="ChEBI" id="CHEBI:78346"/>
        <dbReference type="EC" id="5.4.2.7"/>
    </reaction>
</comment>
<comment type="cofactor">
    <cofactor evidence="1">
        <name>Mn(2+)</name>
        <dbReference type="ChEBI" id="CHEBI:29035"/>
    </cofactor>
    <text evidence="1">Binds 2 manganese ions.</text>
</comment>
<comment type="pathway">
    <text evidence="1">Carbohydrate degradation; 2-deoxy-D-ribose 1-phosphate degradation; D-glyceraldehyde 3-phosphate and acetaldehyde from 2-deoxy-alpha-D-ribose 1-phosphate: step 1/2.</text>
</comment>
<comment type="subcellular location">
    <subcellularLocation>
        <location evidence="1">Cytoplasm</location>
    </subcellularLocation>
</comment>
<comment type="similarity">
    <text evidence="1">Belongs to the phosphopentomutase family.</text>
</comment>
<reference key="1">
    <citation type="journal article" date="2002" name="Proc. Natl. Acad. Sci. U.S.A.">
        <title>Complete genome sequence and comparative genomic analysis of an emerging human pathogen, serotype V Streptococcus agalactiae.</title>
        <authorList>
            <person name="Tettelin H."/>
            <person name="Masignani V."/>
            <person name="Cieslewicz M.J."/>
            <person name="Eisen J.A."/>
            <person name="Peterson S.N."/>
            <person name="Wessels M.R."/>
            <person name="Paulsen I.T."/>
            <person name="Nelson K.E."/>
            <person name="Margarit I."/>
            <person name="Read T.D."/>
            <person name="Madoff L.C."/>
            <person name="Wolf A.M."/>
            <person name="Beanan M.J."/>
            <person name="Brinkac L.M."/>
            <person name="Daugherty S.C."/>
            <person name="DeBoy R.T."/>
            <person name="Durkin A.S."/>
            <person name="Kolonay J.F."/>
            <person name="Madupu R."/>
            <person name="Lewis M.R."/>
            <person name="Radune D."/>
            <person name="Fedorova N.B."/>
            <person name="Scanlan D."/>
            <person name="Khouri H.M."/>
            <person name="Mulligan S."/>
            <person name="Carty H.A."/>
            <person name="Cline R.T."/>
            <person name="Van Aken S.E."/>
            <person name="Gill J."/>
            <person name="Scarselli M."/>
            <person name="Mora M."/>
            <person name="Iacobini E.T."/>
            <person name="Brettoni C."/>
            <person name="Galli G."/>
            <person name="Mariani M."/>
            <person name="Vegni F."/>
            <person name="Maione D."/>
            <person name="Rinaudo D."/>
            <person name="Rappuoli R."/>
            <person name="Telford J.L."/>
            <person name="Kasper D.L."/>
            <person name="Grandi G."/>
            <person name="Fraser C.M."/>
        </authorList>
    </citation>
    <scope>NUCLEOTIDE SEQUENCE [LARGE SCALE GENOMIC DNA]</scope>
    <source>
        <strain>ATCC BAA-611 / 2603 V/R</strain>
    </source>
</reference>
<organism>
    <name type="scientific">Streptococcus agalactiae serotype V (strain ATCC BAA-611 / 2603 V/R)</name>
    <dbReference type="NCBI Taxonomy" id="208435"/>
    <lineage>
        <taxon>Bacteria</taxon>
        <taxon>Bacillati</taxon>
        <taxon>Bacillota</taxon>
        <taxon>Bacilli</taxon>
        <taxon>Lactobacillales</taxon>
        <taxon>Streptococcaceae</taxon>
        <taxon>Streptococcus</taxon>
    </lineage>
</organism>
<gene>
    <name evidence="1" type="primary">deoB1</name>
    <name type="synonym">deoB-1</name>
    <name type="ordered locus">SAG1182</name>
</gene>
<gene>
    <name evidence="1" type="primary">deoB2</name>
    <name type="synonym">deoB-2</name>
    <name type="ordered locus">SAG2069</name>
</gene>
<name>DEOB_STRA5</name>
<feature type="chain" id="PRO_0000199850" description="Phosphopentomutase">
    <location>
        <begin position="1"/>
        <end position="403"/>
    </location>
</feature>
<feature type="binding site" evidence="1">
    <location>
        <position position="13"/>
    </location>
    <ligand>
        <name>Mn(2+)</name>
        <dbReference type="ChEBI" id="CHEBI:29035"/>
        <label>1</label>
    </ligand>
</feature>
<feature type="binding site" evidence="1">
    <location>
        <position position="298"/>
    </location>
    <ligand>
        <name>Mn(2+)</name>
        <dbReference type="ChEBI" id="CHEBI:29035"/>
        <label>2</label>
    </ligand>
</feature>
<feature type="binding site" evidence="1">
    <location>
        <position position="303"/>
    </location>
    <ligand>
        <name>Mn(2+)</name>
        <dbReference type="ChEBI" id="CHEBI:29035"/>
        <label>2</label>
    </ligand>
</feature>
<feature type="binding site" evidence="1">
    <location>
        <position position="339"/>
    </location>
    <ligand>
        <name>Mn(2+)</name>
        <dbReference type="ChEBI" id="CHEBI:29035"/>
        <label>1</label>
    </ligand>
</feature>
<feature type="binding site" evidence="1">
    <location>
        <position position="340"/>
    </location>
    <ligand>
        <name>Mn(2+)</name>
        <dbReference type="ChEBI" id="CHEBI:29035"/>
        <label>1</label>
    </ligand>
</feature>
<feature type="binding site" evidence="1">
    <location>
        <position position="351"/>
    </location>
    <ligand>
        <name>Mn(2+)</name>
        <dbReference type="ChEBI" id="CHEBI:29035"/>
        <label>2</label>
    </ligand>
</feature>
<accession>Q8CMH6</accession>
<keyword id="KW-0963">Cytoplasm</keyword>
<keyword id="KW-0413">Isomerase</keyword>
<keyword id="KW-0464">Manganese</keyword>
<keyword id="KW-0479">Metal-binding</keyword>
<keyword id="KW-1185">Reference proteome</keyword>
<sequence>MSQFDRIHLVVLDSVGIGAAPDANDFVNAGVPDGASDTLGHISKTVGLAVPNMAKIGLGNIPRPQALKTVPAEENPSGYATKLQEVSLGKDTMTGHWEIMGLNITEPFDTFWNGFPEDIITKIEDFSGRKVIREANKPYSGTAVIDDFGPRQMETGELIIYTSADPVLQIAAHEDIIPLEELYRICEYARSITMERPALLGRIIARPYVGEPGNFTRTANRHDYAVSPFEDTVLNKLDQAGIDTYAVGKINDIFNGSGINHDMGHNKSNSHGIDTLIKTMGLSEFEKGFSFTNLVDFDALYGHRRDPHGYRDCLHEFDERLPEIISAMRDKDLLLITADHGNDPTYAGTDHTREYIPLLAYSPSFTGNGLIPVGHFADISATVADNFGVDTAMIGESFLQDLV</sequence>
<protein>
    <recommendedName>
        <fullName evidence="1">Phosphopentomutase</fullName>
        <ecNumber evidence="1">5.4.2.7</ecNumber>
    </recommendedName>
    <alternativeName>
        <fullName evidence="1">Phosphodeoxyribomutase</fullName>
    </alternativeName>
</protein>
<evidence type="ECO:0000255" key="1">
    <source>
        <dbReference type="HAMAP-Rule" id="MF_00740"/>
    </source>
</evidence>
<dbReference type="EC" id="5.4.2.7" evidence="1"/>
<dbReference type="EMBL" id="AE009948">
    <property type="protein sequence ID" value="AAN00064.1"/>
    <property type="molecule type" value="Genomic_DNA"/>
</dbReference>
<dbReference type="EMBL" id="AE009948">
    <property type="protein sequence ID" value="AAN00928.1"/>
    <property type="molecule type" value="Genomic_DNA"/>
</dbReference>
<dbReference type="RefSeq" id="NP_688191.1">
    <property type="nucleotide sequence ID" value="NC_004116.1"/>
</dbReference>
<dbReference type="RefSeq" id="NP_689055.1">
    <property type="nucleotide sequence ID" value="NC_004116.1"/>
</dbReference>
<dbReference type="RefSeq" id="WP_000077187.1">
    <property type="nucleotide sequence ID" value="NC_004116.1"/>
</dbReference>
<dbReference type="SMR" id="Q8CMH6"/>
<dbReference type="STRING" id="208435.SAG1182"/>
<dbReference type="KEGG" id="sag:SAG1182"/>
<dbReference type="KEGG" id="sag:SAG2069"/>
<dbReference type="PATRIC" id="fig|208435.3.peg.1189"/>
<dbReference type="HOGENOM" id="CLU_053861_0_0_9"/>
<dbReference type="OrthoDB" id="9769930at2"/>
<dbReference type="UniPathway" id="UPA00002">
    <property type="reaction ID" value="UER00467"/>
</dbReference>
<dbReference type="Proteomes" id="UP000000821">
    <property type="component" value="Chromosome"/>
</dbReference>
<dbReference type="GO" id="GO:0005829">
    <property type="term" value="C:cytosol"/>
    <property type="evidence" value="ECO:0007669"/>
    <property type="project" value="TreeGrafter"/>
</dbReference>
<dbReference type="GO" id="GO:0000287">
    <property type="term" value="F:magnesium ion binding"/>
    <property type="evidence" value="ECO:0007669"/>
    <property type="project" value="InterPro"/>
</dbReference>
<dbReference type="GO" id="GO:0030145">
    <property type="term" value="F:manganese ion binding"/>
    <property type="evidence" value="ECO:0007669"/>
    <property type="project" value="UniProtKB-UniRule"/>
</dbReference>
<dbReference type="GO" id="GO:0008973">
    <property type="term" value="F:phosphopentomutase activity"/>
    <property type="evidence" value="ECO:0007669"/>
    <property type="project" value="UniProtKB-UniRule"/>
</dbReference>
<dbReference type="GO" id="GO:0006018">
    <property type="term" value="P:2-deoxyribose 1-phosphate catabolic process"/>
    <property type="evidence" value="ECO:0007669"/>
    <property type="project" value="UniProtKB-UniRule"/>
</dbReference>
<dbReference type="GO" id="GO:0006015">
    <property type="term" value="P:5-phosphoribose 1-diphosphate biosynthetic process"/>
    <property type="evidence" value="ECO:0007669"/>
    <property type="project" value="UniProtKB-UniPathway"/>
</dbReference>
<dbReference type="GO" id="GO:0043094">
    <property type="term" value="P:metabolic compound salvage"/>
    <property type="evidence" value="ECO:0007669"/>
    <property type="project" value="InterPro"/>
</dbReference>
<dbReference type="GO" id="GO:0009117">
    <property type="term" value="P:nucleotide metabolic process"/>
    <property type="evidence" value="ECO:0007669"/>
    <property type="project" value="InterPro"/>
</dbReference>
<dbReference type="CDD" id="cd16009">
    <property type="entry name" value="PPM"/>
    <property type="match status" value="1"/>
</dbReference>
<dbReference type="FunFam" id="3.30.70.1250:FF:000001">
    <property type="entry name" value="Phosphopentomutase"/>
    <property type="match status" value="1"/>
</dbReference>
<dbReference type="Gene3D" id="3.40.720.10">
    <property type="entry name" value="Alkaline Phosphatase, subunit A"/>
    <property type="match status" value="1"/>
</dbReference>
<dbReference type="Gene3D" id="3.30.70.1250">
    <property type="entry name" value="Phosphopentomutase"/>
    <property type="match status" value="1"/>
</dbReference>
<dbReference type="HAMAP" id="MF_00740">
    <property type="entry name" value="Phosphopentomut"/>
    <property type="match status" value="1"/>
</dbReference>
<dbReference type="InterPro" id="IPR017850">
    <property type="entry name" value="Alkaline_phosphatase_core_sf"/>
</dbReference>
<dbReference type="InterPro" id="IPR010045">
    <property type="entry name" value="DeoB"/>
</dbReference>
<dbReference type="InterPro" id="IPR006124">
    <property type="entry name" value="Metalloenzyme"/>
</dbReference>
<dbReference type="InterPro" id="IPR024052">
    <property type="entry name" value="Phosphopentomutase_DeoB_cap_sf"/>
</dbReference>
<dbReference type="NCBIfam" id="TIGR01696">
    <property type="entry name" value="deoB"/>
    <property type="match status" value="1"/>
</dbReference>
<dbReference type="NCBIfam" id="NF003766">
    <property type="entry name" value="PRK05362.1"/>
    <property type="match status" value="1"/>
</dbReference>
<dbReference type="PANTHER" id="PTHR21110">
    <property type="entry name" value="PHOSPHOPENTOMUTASE"/>
    <property type="match status" value="1"/>
</dbReference>
<dbReference type="PANTHER" id="PTHR21110:SF0">
    <property type="entry name" value="PHOSPHOPENTOMUTASE"/>
    <property type="match status" value="1"/>
</dbReference>
<dbReference type="Pfam" id="PF01676">
    <property type="entry name" value="Metalloenzyme"/>
    <property type="match status" value="1"/>
</dbReference>
<dbReference type="PIRSF" id="PIRSF001491">
    <property type="entry name" value="Ppentomutase"/>
    <property type="match status" value="1"/>
</dbReference>
<dbReference type="SUPFAM" id="SSF53649">
    <property type="entry name" value="Alkaline phosphatase-like"/>
    <property type="match status" value="1"/>
</dbReference>
<dbReference type="SUPFAM" id="SSF143856">
    <property type="entry name" value="DeoB insert domain-like"/>
    <property type="match status" value="1"/>
</dbReference>